<gene>
    <name evidence="1" type="primary">pyrF</name>
    <name type="ordered locus">APL_0736</name>
</gene>
<protein>
    <recommendedName>
        <fullName evidence="1">Orotidine 5'-phosphate decarboxylase</fullName>
        <ecNumber evidence="1">4.1.1.23</ecNumber>
    </recommendedName>
    <alternativeName>
        <fullName evidence="1">OMP decarboxylase</fullName>
        <shortName evidence="1">OMPDCase</shortName>
        <shortName evidence="1">OMPdecase</shortName>
    </alternativeName>
</protein>
<accession>A3N0A0</accession>
<name>PYRF_ACTP2</name>
<keyword id="KW-0210">Decarboxylase</keyword>
<keyword id="KW-0456">Lyase</keyword>
<keyword id="KW-0665">Pyrimidine biosynthesis</keyword>
<keyword id="KW-1185">Reference proteome</keyword>
<feature type="chain" id="PRO_1000065891" description="Orotidine 5'-phosphate decarboxylase">
    <location>
        <begin position="1"/>
        <end position="230"/>
    </location>
</feature>
<feature type="active site" description="Proton donor" evidence="1">
    <location>
        <position position="61"/>
    </location>
</feature>
<feature type="binding site" evidence="1">
    <location>
        <position position="10"/>
    </location>
    <ligand>
        <name>substrate</name>
    </ligand>
</feature>
<feature type="binding site" evidence="1">
    <location>
        <position position="32"/>
    </location>
    <ligand>
        <name>substrate</name>
    </ligand>
</feature>
<feature type="binding site" evidence="1">
    <location>
        <begin position="59"/>
        <end position="68"/>
    </location>
    <ligand>
        <name>substrate</name>
    </ligand>
</feature>
<feature type="binding site" evidence="1">
    <location>
        <position position="119"/>
    </location>
    <ligand>
        <name>substrate</name>
    </ligand>
</feature>
<feature type="binding site" evidence="1">
    <location>
        <position position="180"/>
    </location>
    <ligand>
        <name>substrate</name>
    </ligand>
</feature>
<feature type="binding site" evidence="1">
    <location>
        <position position="189"/>
    </location>
    <ligand>
        <name>substrate</name>
    </ligand>
</feature>
<feature type="binding site" evidence="1">
    <location>
        <position position="209"/>
    </location>
    <ligand>
        <name>substrate</name>
    </ligand>
</feature>
<feature type="binding site" evidence="1">
    <location>
        <position position="210"/>
    </location>
    <ligand>
        <name>substrate</name>
    </ligand>
</feature>
<evidence type="ECO:0000255" key="1">
    <source>
        <dbReference type="HAMAP-Rule" id="MF_01200"/>
    </source>
</evidence>
<sequence length="230" mass="25418">MDNKIIVALDYETEYEALSFVDQVDPSLCRVKVGKEMFTTLGTNFVKQLHERKFDVFLDLKYHDIPNTVARAVRSAADLGVWMVDLHASGGLTMMEEAKKILEPYGKDAPLLIAVTVLTSMEDLDLLQIGINASPMEQVIRLAHLAQRAGLDGVVCSPQEVEVLRTHCGKDFKLVTPGIRPEGSDVGDQRRIMTPKQAIETGSDYLVIGRPITQAQDPLSVLKSINASIR</sequence>
<dbReference type="EC" id="4.1.1.23" evidence="1"/>
<dbReference type="EMBL" id="CP000569">
    <property type="protein sequence ID" value="ABN73836.1"/>
    <property type="molecule type" value="Genomic_DNA"/>
</dbReference>
<dbReference type="RefSeq" id="WP_005597131.1">
    <property type="nucleotide sequence ID" value="NC_009053.1"/>
</dbReference>
<dbReference type="SMR" id="A3N0A0"/>
<dbReference type="STRING" id="416269.APL_0736"/>
<dbReference type="EnsemblBacteria" id="ABN73836">
    <property type="protein sequence ID" value="ABN73836"/>
    <property type="gene ID" value="APL_0736"/>
</dbReference>
<dbReference type="GeneID" id="48598917"/>
<dbReference type="KEGG" id="apl:APL_0736"/>
<dbReference type="eggNOG" id="COG0284">
    <property type="taxonomic scope" value="Bacteria"/>
</dbReference>
<dbReference type="HOGENOM" id="CLU_067069_0_0_6"/>
<dbReference type="UniPathway" id="UPA00070">
    <property type="reaction ID" value="UER00120"/>
</dbReference>
<dbReference type="Proteomes" id="UP000001432">
    <property type="component" value="Chromosome"/>
</dbReference>
<dbReference type="GO" id="GO:0005829">
    <property type="term" value="C:cytosol"/>
    <property type="evidence" value="ECO:0007669"/>
    <property type="project" value="TreeGrafter"/>
</dbReference>
<dbReference type="GO" id="GO:0004590">
    <property type="term" value="F:orotidine-5'-phosphate decarboxylase activity"/>
    <property type="evidence" value="ECO:0007669"/>
    <property type="project" value="UniProtKB-UniRule"/>
</dbReference>
<dbReference type="GO" id="GO:0006207">
    <property type="term" value="P:'de novo' pyrimidine nucleobase biosynthetic process"/>
    <property type="evidence" value="ECO:0007669"/>
    <property type="project" value="InterPro"/>
</dbReference>
<dbReference type="GO" id="GO:0044205">
    <property type="term" value="P:'de novo' UMP biosynthetic process"/>
    <property type="evidence" value="ECO:0007669"/>
    <property type="project" value="UniProtKB-UniRule"/>
</dbReference>
<dbReference type="CDD" id="cd04725">
    <property type="entry name" value="OMP_decarboxylase_like"/>
    <property type="match status" value="1"/>
</dbReference>
<dbReference type="FunFam" id="3.20.20.70:FF:000015">
    <property type="entry name" value="Orotidine 5'-phosphate decarboxylase"/>
    <property type="match status" value="1"/>
</dbReference>
<dbReference type="Gene3D" id="3.20.20.70">
    <property type="entry name" value="Aldolase class I"/>
    <property type="match status" value="1"/>
</dbReference>
<dbReference type="HAMAP" id="MF_01200_B">
    <property type="entry name" value="OMPdecase_type1_B"/>
    <property type="match status" value="1"/>
</dbReference>
<dbReference type="InterPro" id="IPR013785">
    <property type="entry name" value="Aldolase_TIM"/>
</dbReference>
<dbReference type="InterPro" id="IPR014732">
    <property type="entry name" value="OMPdecase"/>
</dbReference>
<dbReference type="InterPro" id="IPR018089">
    <property type="entry name" value="OMPdecase_AS"/>
</dbReference>
<dbReference type="InterPro" id="IPR047596">
    <property type="entry name" value="OMPdecase_bac"/>
</dbReference>
<dbReference type="InterPro" id="IPR001754">
    <property type="entry name" value="OMPdeCOase_dom"/>
</dbReference>
<dbReference type="InterPro" id="IPR011060">
    <property type="entry name" value="RibuloseP-bd_barrel"/>
</dbReference>
<dbReference type="NCBIfam" id="NF001273">
    <property type="entry name" value="PRK00230.1"/>
    <property type="match status" value="1"/>
</dbReference>
<dbReference type="NCBIfam" id="TIGR01740">
    <property type="entry name" value="pyrF"/>
    <property type="match status" value="1"/>
</dbReference>
<dbReference type="PANTHER" id="PTHR32119">
    <property type="entry name" value="OROTIDINE 5'-PHOSPHATE DECARBOXYLASE"/>
    <property type="match status" value="1"/>
</dbReference>
<dbReference type="PANTHER" id="PTHR32119:SF2">
    <property type="entry name" value="OROTIDINE 5'-PHOSPHATE DECARBOXYLASE"/>
    <property type="match status" value="1"/>
</dbReference>
<dbReference type="Pfam" id="PF00215">
    <property type="entry name" value="OMPdecase"/>
    <property type="match status" value="1"/>
</dbReference>
<dbReference type="SMART" id="SM00934">
    <property type="entry name" value="OMPdecase"/>
    <property type="match status" value="1"/>
</dbReference>
<dbReference type="SUPFAM" id="SSF51366">
    <property type="entry name" value="Ribulose-phoshate binding barrel"/>
    <property type="match status" value="1"/>
</dbReference>
<dbReference type="PROSITE" id="PS00156">
    <property type="entry name" value="OMPDECASE"/>
    <property type="match status" value="1"/>
</dbReference>
<organism>
    <name type="scientific">Actinobacillus pleuropneumoniae serotype 5b (strain L20)</name>
    <dbReference type="NCBI Taxonomy" id="416269"/>
    <lineage>
        <taxon>Bacteria</taxon>
        <taxon>Pseudomonadati</taxon>
        <taxon>Pseudomonadota</taxon>
        <taxon>Gammaproteobacteria</taxon>
        <taxon>Pasteurellales</taxon>
        <taxon>Pasteurellaceae</taxon>
        <taxon>Actinobacillus</taxon>
    </lineage>
</organism>
<comment type="function">
    <text evidence="1">Catalyzes the decarboxylation of orotidine 5'-monophosphate (OMP) to uridine 5'-monophosphate (UMP).</text>
</comment>
<comment type="catalytic activity">
    <reaction evidence="1">
        <text>orotidine 5'-phosphate + H(+) = UMP + CO2</text>
        <dbReference type="Rhea" id="RHEA:11596"/>
        <dbReference type="ChEBI" id="CHEBI:15378"/>
        <dbReference type="ChEBI" id="CHEBI:16526"/>
        <dbReference type="ChEBI" id="CHEBI:57538"/>
        <dbReference type="ChEBI" id="CHEBI:57865"/>
        <dbReference type="EC" id="4.1.1.23"/>
    </reaction>
</comment>
<comment type="pathway">
    <text evidence="1">Pyrimidine metabolism; UMP biosynthesis via de novo pathway; UMP from orotate: step 2/2.</text>
</comment>
<comment type="subunit">
    <text evidence="1">Homodimer.</text>
</comment>
<comment type="similarity">
    <text evidence="1">Belongs to the OMP decarboxylase family. Type 1 subfamily.</text>
</comment>
<reference key="1">
    <citation type="journal article" date="2008" name="J. Bacteriol.">
        <title>The complete genome sequence of Actinobacillus pleuropneumoniae L20 (serotype 5b).</title>
        <authorList>
            <person name="Foote S.J."/>
            <person name="Bosse J.T."/>
            <person name="Bouevitch A.B."/>
            <person name="Langford P.R."/>
            <person name="Young N.M."/>
            <person name="Nash J.H.E."/>
        </authorList>
    </citation>
    <scope>NUCLEOTIDE SEQUENCE [LARGE SCALE GENOMIC DNA]</scope>
    <source>
        <strain>L20</strain>
    </source>
</reference>
<proteinExistence type="inferred from homology"/>